<reference key="1">
    <citation type="journal article" date="2008" name="BMC Genomics">
        <title>The genome sequence of the fish pathogen Aliivibrio salmonicida strain LFI1238 shows extensive evidence of gene decay.</title>
        <authorList>
            <person name="Hjerde E."/>
            <person name="Lorentzen M.S."/>
            <person name="Holden M.T."/>
            <person name="Seeger K."/>
            <person name="Paulsen S."/>
            <person name="Bason N."/>
            <person name="Churcher C."/>
            <person name="Harris D."/>
            <person name="Norbertczak H."/>
            <person name="Quail M.A."/>
            <person name="Sanders S."/>
            <person name="Thurston S."/>
            <person name="Parkhill J."/>
            <person name="Willassen N.P."/>
            <person name="Thomson N.R."/>
        </authorList>
    </citation>
    <scope>NUCLEOTIDE SEQUENCE [LARGE SCALE GENOMIC DNA]</scope>
    <source>
        <strain>LFI1238</strain>
    </source>
</reference>
<accession>B6EJ93</accession>
<name>HIS6_ALISL</name>
<comment type="function">
    <text evidence="1">IGPS catalyzes the conversion of PRFAR and glutamine to IGP, AICAR and glutamate. The HisF subunit catalyzes the cyclization activity that produces IGP and AICAR from PRFAR using the ammonia provided by the HisH subunit.</text>
</comment>
<comment type="catalytic activity">
    <reaction evidence="1">
        <text>5-[(5-phospho-1-deoxy-D-ribulos-1-ylimino)methylamino]-1-(5-phospho-beta-D-ribosyl)imidazole-4-carboxamide + L-glutamine = D-erythro-1-(imidazol-4-yl)glycerol 3-phosphate + 5-amino-1-(5-phospho-beta-D-ribosyl)imidazole-4-carboxamide + L-glutamate + H(+)</text>
        <dbReference type="Rhea" id="RHEA:24793"/>
        <dbReference type="ChEBI" id="CHEBI:15378"/>
        <dbReference type="ChEBI" id="CHEBI:29985"/>
        <dbReference type="ChEBI" id="CHEBI:58278"/>
        <dbReference type="ChEBI" id="CHEBI:58359"/>
        <dbReference type="ChEBI" id="CHEBI:58475"/>
        <dbReference type="ChEBI" id="CHEBI:58525"/>
        <dbReference type="EC" id="4.3.2.10"/>
    </reaction>
</comment>
<comment type="pathway">
    <text evidence="1">Amino-acid biosynthesis; L-histidine biosynthesis; L-histidine from 5-phospho-alpha-D-ribose 1-diphosphate: step 5/9.</text>
</comment>
<comment type="subunit">
    <text evidence="1">Heterodimer of HisH and HisF.</text>
</comment>
<comment type="subcellular location">
    <subcellularLocation>
        <location evidence="1">Cytoplasm</location>
    </subcellularLocation>
</comment>
<comment type="similarity">
    <text evidence="1">Belongs to the HisA/HisF family.</text>
</comment>
<feature type="chain" id="PRO_1000134960" description="Imidazole glycerol phosphate synthase subunit HisF">
    <location>
        <begin position="1"/>
        <end position="257"/>
    </location>
</feature>
<feature type="active site" evidence="1">
    <location>
        <position position="11"/>
    </location>
</feature>
<feature type="active site" evidence="1">
    <location>
        <position position="130"/>
    </location>
</feature>
<dbReference type="EC" id="4.3.2.10" evidence="1"/>
<dbReference type="EMBL" id="FM178379">
    <property type="protein sequence ID" value="CAQ78824.1"/>
    <property type="molecule type" value="Genomic_DNA"/>
</dbReference>
<dbReference type="RefSeq" id="WP_012549884.1">
    <property type="nucleotide sequence ID" value="NC_011312.1"/>
</dbReference>
<dbReference type="SMR" id="B6EJ93"/>
<dbReference type="KEGG" id="vsa:VSAL_I1139"/>
<dbReference type="eggNOG" id="COG0107">
    <property type="taxonomic scope" value="Bacteria"/>
</dbReference>
<dbReference type="HOGENOM" id="CLU_048577_4_0_6"/>
<dbReference type="UniPathway" id="UPA00031">
    <property type="reaction ID" value="UER00010"/>
</dbReference>
<dbReference type="Proteomes" id="UP000001730">
    <property type="component" value="Chromosome 1"/>
</dbReference>
<dbReference type="GO" id="GO:0005737">
    <property type="term" value="C:cytoplasm"/>
    <property type="evidence" value="ECO:0007669"/>
    <property type="project" value="UniProtKB-SubCell"/>
</dbReference>
<dbReference type="GO" id="GO:0000107">
    <property type="term" value="F:imidazoleglycerol-phosphate synthase activity"/>
    <property type="evidence" value="ECO:0007669"/>
    <property type="project" value="UniProtKB-UniRule"/>
</dbReference>
<dbReference type="GO" id="GO:0016829">
    <property type="term" value="F:lyase activity"/>
    <property type="evidence" value="ECO:0007669"/>
    <property type="project" value="UniProtKB-KW"/>
</dbReference>
<dbReference type="GO" id="GO:0000105">
    <property type="term" value="P:L-histidine biosynthetic process"/>
    <property type="evidence" value="ECO:0007669"/>
    <property type="project" value="UniProtKB-UniRule"/>
</dbReference>
<dbReference type="CDD" id="cd04731">
    <property type="entry name" value="HisF"/>
    <property type="match status" value="1"/>
</dbReference>
<dbReference type="FunFam" id="3.20.20.70:FF:000006">
    <property type="entry name" value="Imidazole glycerol phosphate synthase subunit HisF"/>
    <property type="match status" value="1"/>
</dbReference>
<dbReference type="Gene3D" id="3.20.20.70">
    <property type="entry name" value="Aldolase class I"/>
    <property type="match status" value="1"/>
</dbReference>
<dbReference type="HAMAP" id="MF_01013">
    <property type="entry name" value="HisF"/>
    <property type="match status" value="1"/>
</dbReference>
<dbReference type="InterPro" id="IPR013785">
    <property type="entry name" value="Aldolase_TIM"/>
</dbReference>
<dbReference type="InterPro" id="IPR006062">
    <property type="entry name" value="His_biosynth"/>
</dbReference>
<dbReference type="InterPro" id="IPR004651">
    <property type="entry name" value="HisF"/>
</dbReference>
<dbReference type="InterPro" id="IPR050064">
    <property type="entry name" value="IGPS_HisA/HisF"/>
</dbReference>
<dbReference type="InterPro" id="IPR011060">
    <property type="entry name" value="RibuloseP-bd_barrel"/>
</dbReference>
<dbReference type="NCBIfam" id="TIGR00735">
    <property type="entry name" value="hisF"/>
    <property type="match status" value="1"/>
</dbReference>
<dbReference type="PANTHER" id="PTHR21235:SF2">
    <property type="entry name" value="IMIDAZOLE GLYCEROL PHOSPHATE SYNTHASE HISHF"/>
    <property type="match status" value="1"/>
</dbReference>
<dbReference type="PANTHER" id="PTHR21235">
    <property type="entry name" value="IMIDAZOLE GLYCEROL PHOSPHATE SYNTHASE SUBUNIT HISF/H IGP SYNTHASE SUBUNIT HISF/H"/>
    <property type="match status" value="1"/>
</dbReference>
<dbReference type="Pfam" id="PF00977">
    <property type="entry name" value="His_biosynth"/>
    <property type="match status" value="1"/>
</dbReference>
<dbReference type="SUPFAM" id="SSF51366">
    <property type="entry name" value="Ribulose-phoshate binding barrel"/>
    <property type="match status" value="1"/>
</dbReference>
<evidence type="ECO:0000255" key="1">
    <source>
        <dbReference type="HAMAP-Rule" id="MF_01013"/>
    </source>
</evidence>
<organism>
    <name type="scientific">Aliivibrio salmonicida (strain LFI1238)</name>
    <name type="common">Vibrio salmonicida (strain LFI1238)</name>
    <dbReference type="NCBI Taxonomy" id="316275"/>
    <lineage>
        <taxon>Bacteria</taxon>
        <taxon>Pseudomonadati</taxon>
        <taxon>Pseudomonadota</taxon>
        <taxon>Gammaproteobacteria</taxon>
        <taxon>Vibrionales</taxon>
        <taxon>Vibrionaceae</taxon>
        <taxon>Aliivibrio</taxon>
    </lineage>
</organism>
<keyword id="KW-0028">Amino-acid biosynthesis</keyword>
<keyword id="KW-0963">Cytoplasm</keyword>
<keyword id="KW-0368">Histidine biosynthesis</keyword>
<keyword id="KW-0456">Lyase</keyword>
<sequence>MLAKRIIPCLDVKDGQVVKGVQFRNHEIIGDIVPLAQRYAEEGADELVFYDITASSDGRVVDKSWVARVAEVIDIPFCVAGGIKTAEDAAKILEFGADKVSINSPALANPELITELADKFGVQCIVVGIDSYFDKETGKYQVYQFTGDEERTKATKWETKDWVQEVQKRGAGEIVLNMMNQDGVRNGYDLEQLNMVREVCHVPLIASGGAGEMVHFADVYKKTNVDGALAASVFHKQIINIGELKEYLAQQKIEVRR</sequence>
<gene>
    <name evidence="1" type="primary">hisF</name>
    <name type="ordered locus">VSAL_I1139</name>
</gene>
<proteinExistence type="inferred from homology"/>
<protein>
    <recommendedName>
        <fullName evidence="1">Imidazole glycerol phosphate synthase subunit HisF</fullName>
        <ecNumber evidence="1">4.3.2.10</ecNumber>
    </recommendedName>
    <alternativeName>
        <fullName evidence="1">IGP synthase cyclase subunit</fullName>
    </alternativeName>
    <alternativeName>
        <fullName evidence="1">IGP synthase subunit HisF</fullName>
    </alternativeName>
    <alternativeName>
        <fullName evidence="1">ImGP synthase subunit HisF</fullName>
        <shortName evidence="1">IGPS subunit HisF</shortName>
    </alternativeName>
</protein>